<evidence type="ECO:0000255" key="1">
    <source>
        <dbReference type="HAMAP-Rule" id="MF_01307"/>
    </source>
</evidence>
<evidence type="ECO:0000305" key="2"/>
<feature type="chain" id="PRO_1000140826" description="Small ribosomal subunit protein uS5">
    <location>
        <begin position="1"/>
        <end position="165"/>
    </location>
</feature>
<feature type="domain" description="S5 DRBM" evidence="1">
    <location>
        <begin position="10"/>
        <end position="73"/>
    </location>
</feature>
<organism>
    <name type="scientific">Acinetobacter baumannii (strain AB307-0294)</name>
    <dbReference type="NCBI Taxonomy" id="557600"/>
    <lineage>
        <taxon>Bacteria</taxon>
        <taxon>Pseudomonadati</taxon>
        <taxon>Pseudomonadota</taxon>
        <taxon>Gammaproteobacteria</taxon>
        <taxon>Moraxellales</taxon>
        <taxon>Moraxellaceae</taxon>
        <taxon>Acinetobacter</taxon>
        <taxon>Acinetobacter calcoaceticus/baumannii complex</taxon>
    </lineage>
</organism>
<proteinExistence type="inferred from homology"/>
<comment type="function">
    <text evidence="1">With S4 and S12 plays an important role in translational accuracy.</text>
</comment>
<comment type="function">
    <text evidence="1">Located at the back of the 30S subunit body where it stabilizes the conformation of the head with respect to the body.</text>
</comment>
<comment type="subunit">
    <text evidence="1">Part of the 30S ribosomal subunit. Contacts proteins S4 and S8.</text>
</comment>
<comment type="domain">
    <text>The N-terminal domain interacts with the head of the 30S subunit; the C-terminal domain interacts with the body and contacts protein S4. The interaction surface between S4 and S5 is involved in control of translational fidelity.</text>
</comment>
<comment type="similarity">
    <text evidence="1">Belongs to the universal ribosomal protein uS5 family.</text>
</comment>
<keyword id="KW-0687">Ribonucleoprotein</keyword>
<keyword id="KW-0689">Ribosomal protein</keyword>
<keyword id="KW-0694">RNA-binding</keyword>
<keyword id="KW-0699">rRNA-binding</keyword>
<protein>
    <recommendedName>
        <fullName evidence="1">Small ribosomal subunit protein uS5</fullName>
    </recommendedName>
    <alternativeName>
        <fullName evidence="2">30S ribosomal protein S5</fullName>
    </alternativeName>
</protein>
<name>RS5_ACIB3</name>
<dbReference type="EMBL" id="CP001172">
    <property type="protein sequence ID" value="ACJ58819.1"/>
    <property type="molecule type" value="Genomic_DNA"/>
</dbReference>
<dbReference type="RefSeq" id="WP_001141025.1">
    <property type="nucleotide sequence ID" value="NZ_CP001172.1"/>
</dbReference>
<dbReference type="SMR" id="B7GW19"/>
<dbReference type="GeneID" id="92895300"/>
<dbReference type="HOGENOM" id="CLU_065898_2_2_6"/>
<dbReference type="Proteomes" id="UP000006924">
    <property type="component" value="Chromosome"/>
</dbReference>
<dbReference type="GO" id="GO:0015935">
    <property type="term" value="C:small ribosomal subunit"/>
    <property type="evidence" value="ECO:0007669"/>
    <property type="project" value="InterPro"/>
</dbReference>
<dbReference type="GO" id="GO:0019843">
    <property type="term" value="F:rRNA binding"/>
    <property type="evidence" value="ECO:0007669"/>
    <property type="project" value="UniProtKB-UniRule"/>
</dbReference>
<dbReference type="GO" id="GO:0003735">
    <property type="term" value="F:structural constituent of ribosome"/>
    <property type="evidence" value="ECO:0007669"/>
    <property type="project" value="InterPro"/>
</dbReference>
<dbReference type="GO" id="GO:0006412">
    <property type="term" value="P:translation"/>
    <property type="evidence" value="ECO:0007669"/>
    <property type="project" value="UniProtKB-UniRule"/>
</dbReference>
<dbReference type="FunFam" id="3.30.160.20:FF:000001">
    <property type="entry name" value="30S ribosomal protein S5"/>
    <property type="match status" value="1"/>
</dbReference>
<dbReference type="FunFam" id="3.30.230.10:FF:000002">
    <property type="entry name" value="30S ribosomal protein S5"/>
    <property type="match status" value="1"/>
</dbReference>
<dbReference type="Gene3D" id="3.30.160.20">
    <property type="match status" value="1"/>
</dbReference>
<dbReference type="Gene3D" id="3.30.230.10">
    <property type="match status" value="1"/>
</dbReference>
<dbReference type="HAMAP" id="MF_01307_B">
    <property type="entry name" value="Ribosomal_uS5_B"/>
    <property type="match status" value="1"/>
</dbReference>
<dbReference type="InterPro" id="IPR020568">
    <property type="entry name" value="Ribosomal_Su5_D2-typ_SF"/>
</dbReference>
<dbReference type="InterPro" id="IPR000851">
    <property type="entry name" value="Ribosomal_uS5"/>
</dbReference>
<dbReference type="InterPro" id="IPR005712">
    <property type="entry name" value="Ribosomal_uS5_bac-type"/>
</dbReference>
<dbReference type="InterPro" id="IPR005324">
    <property type="entry name" value="Ribosomal_uS5_C"/>
</dbReference>
<dbReference type="InterPro" id="IPR013810">
    <property type="entry name" value="Ribosomal_uS5_N"/>
</dbReference>
<dbReference type="InterPro" id="IPR018192">
    <property type="entry name" value="Ribosomal_uS5_N_CS"/>
</dbReference>
<dbReference type="InterPro" id="IPR014721">
    <property type="entry name" value="Ribsml_uS5_D2-typ_fold_subgr"/>
</dbReference>
<dbReference type="NCBIfam" id="TIGR01021">
    <property type="entry name" value="rpsE_bact"/>
    <property type="match status" value="1"/>
</dbReference>
<dbReference type="PANTHER" id="PTHR48277">
    <property type="entry name" value="MITOCHONDRIAL RIBOSOMAL PROTEIN S5"/>
    <property type="match status" value="1"/>
</dbReference>
<dbReference type="PANTHER" id="PTHR48277:SF1">
    <property type="entry name" value="MITOCHONDRIAL RIBOSOMAL PROTEIN S5"/>
    <property type="match status" value="1"/>
</dbReference>
<dbReference type="Pfam" id="PF00333">
    <property type="entry name" value="Ribosomal_S5"/>
    <property type="match status" value="1"/>
</dbReference>
<dbReference type="Pfam" id="PF03719">
    <property type="entry name" value="Ribosomal_S5_C"/>
    <property type="match status" value="1"/>
</dbReference>
<dbReference type="SUPFAM" id="SSF54768">
    <property type="entry name" value="dsRNA-binding domain-like"/>
    <property type="match status" value="1"/>
</dbReference>
<dbReference type="SUPFAM" id="SSF54211">
    <property type="entry name" value="Ribosomal protein S5 domain 2-like"/>
    <property type="match status" value="1"/>
</dbReference>
<dbReference type="PROSITE" id="PS00585">
    <property type="entry name" value="RIBOSOMAL_S5"/>
    <property type="match status" value="1"/>
</dbReference>
<dbReference type="PROSITE" id="PS50881">
    <property type="entry name" value="S5_DSRBD"/>
    <property type="match status" value="1"/>
</dbReference>
<reference key="1">
    <citation type="journal article" date="2008" name="J. Bacteriol.">
        <title>Comparative genome sequence analysis of multidrug-resistant Acinetobacter baumannii.</title>
        <authorList>
            <person name="Adams M.D."/>
            <person name="Goglin K."/>
            <person name="Molyneaux N."/>
            <person name="Hujer K.M."/>
            <person name="Lavender H."/>
            <person name="Jamison J.J."/>
            <person name="MacDonald I.J."/>
            <person name="Martin K.M."/>
            <person name="Russo T."/>
            <person name="Campagnari A.A."/>
            <person name="Hujer A.M."/>
            <person name="Bonomo R.A."/>
            <person name="Gill S.R."/>
        </authorList>
    </citation>
    <scope>NUCLEOTIDE SEQUENCE [LARGE SCALE GENOMIC DNA]</scope>
    <source>
        <strain>AB307-0294</strain>
    </source>
</reference>
<gene>
    <name evidence="1" type="primary">rpsE</name>
    <name type="ordered locus">ABBFA_000449</name>
</gene>
<accession>B7GW19</accession>
<sequence>MAKVEQNEGLVEKLVAVDRVAKVVKGGRIFSFTALTVVGDGNGRVGFGRGKAREVPAAISKALEAARRNMITVDLAGTTLQHPVNARHGASRVYMQPASEGTGVIAGGAMRAVLEAAGVHNVLAKCYGSTNAANVVNATFKGLRDMTSPEKVAAKRGKSVEEIQG</sequence>